<keyword id="KW-0342">GTP-binding</keyword>
<keyword id="KW-0547">Nucleotide-binding</keyword>
<keyword id="KW-1185">Reference proteome</keyword>
<keyword id="KW-0677">Repeat</keyword>
<keyword id="KW-0690">Ribosome biogenesis</keyword>
<evidence type="ECO:0000255" key="1">
    <source>
        <dbReference type="HAMAP-Rule" id="MF_00195"/>
    </source>
</evidence>
<protein>
    <recommendedName>
        <fullName evidence="1">GTPase Der</fullName>
    </recommendedName>
    <alternativeName>
        <fullName evidence="1">GTP-binding protein EngA</fullName>
    </alternativeName>
</protein>
<organism>
    <name type="scientific">Stenotrophomonas maltophilia (strain K279a)</name>
    <dbReference type="NCBI Taxonomy" id="522373"/>
    <lineage>
        <taxon>Bacteria</taxon>
        <taxon>Pseudomonadati</taxon>
        <taxon>Pseudomonadota</taxon>
        <taxon>Gammaproteobacteria</taxon>
        <taxon>Lysobacterales</taxon>
        <taxon>Lysobacteraceae</taxon>
        <taxon>Stenotrophomonas</taxon>
        <taxon>Stenotrophomonas maltophilia group</taxon>
    </lineage>
</organism>
<accession>B2FNR1</accession>
<proteinExistence type="inferred from homology"/>
<reference key="1">
    <citation type="journal article" date="2008" name="Genome Biol.">
        <title>The complete genome, comparative and functional analysis of Stenotrophomonas maltophilia reveals an organism heavily shielded by drug resistance determinants.</title>
        <authorList>
            <person name="Crossman L.C."/>
            <person name="Gould V.C."/>
            <person name="Dow J.M."/>
            <person name="Vernikos G.S."/>
            <person name="Okazaki A."/>
            <person name="Sebaihia M."/>
            <person name="Saunders D."/>
            <person name="Arrowsmith C."/>
            <person name="Carver T."/>
            <person name="Peters N."/>
            <person name="Adlem E."/>
            <person name="Kerhornou A."/>
            <person name="Lord A."/>
            <person name="Murphy L."/>
            <person name="Seeger K."/>
            <person name="Squares R."/>
            <person name="Rutter S."/>
            <person name="Quail M.A."/>
            <person name="Rajandream M.A."/>
            <person name="Harris D."/>
            <person name="Churcher C."/>
            <person name="Bentley S.D."/>
            <person name="Parkhill J."/>
            <person name="Thomson N.R."/>
            <person name="Avison M.B."/>
        </authorList>
    </citation>
    <scope>NUCLEOTIDE SEQUENCE [LARGE SCALE GENOMIC DNA]</scope>
    <source>
        <strain>K279a</strain>
    </source>
</reference>
<name>DER_STRMK</name>
<feature type="chain" id="PRO_1000099163" description="GTPase Der">
    <location>
        <begin position="1"/>
        <end position="465"/>
    </location>
</feature>
<feature type="domain" description="EngA-type G 1">
    <location>
        <begin position="3"/>
        <end position="167"/>
    </location>
</feature>
<feature type="domain" description="EngA-type G 2">
    <location>
        <begin position="179"/>
        <end position="352"/>
    </location>
</feature>
<feature type="domain" description="KH-like" evidence="1">
    <location>
        <begin position="353"/>
        <end position="437"/>
    </location>
</feature>
<feature type="binding site" evidence="1">
    <location>
        <begin position="9"/>
        <end position="16"/>
    </location>
    <ligand>
        <name>GTP</name>
        <dbReference type="ChEBI" id="CHEBI:37565"/>
        <label>1</label>
    </ligand>
</feature>
<feature type="binding site" evidence="1">
    <location>
        <begin position="57"/>
        <end position="61"/>
    </location>
    <ligand>
        <name>GTP</name>
        <dbReference type="ChEBI" id="CHEBI:37565"/>
        <label>1</label>
    </ligand>
</feature>
<feature type="binding site" evidence="1">
    <location>
        <begin position="119"/>
        <end position="122"/>
    </location>
    <ligand>
        <name>GTP</name>
        <dbReference type="ChEBI" id="CHEBI:37565"/>
        <label>1</label>
    </ligand>
</feature>
<feature type="binding site" evidence="1">
    <location>
        <begin position="185"/>
        <end position="192"/>
    </location>
    <ligand>
        <name>GTP</name>
        <dbReference type="ChEBI" id="CHEBI:37565"/>
        <label>2</label>
    </ligand>
</feature>
<feature type="binding site" evidence="1">
    <location>
        <begin position="232"/>
        <end position="236"/>
    </location>
    <ligand>
        <name>GTP</name>
        <dbReference type="ChEBI" id="CHEBI:37565"/>
        <label>2</label>
    </ligand>
</feature>
<feature type="binding site" evidence="1">
    <location>
        <begin position="297"/>
        <end position="300"/>
    </location>
    <ligand>
        <name>GTP</name>
        <dbReference type="ChEBI" id="CHEBI:37565"/>
        <label>2</label>
    </ligand>
</feature>
<gene>
    <name evidence="1" type="primary">der</name>
    <name type="synonym">engA</name>
    <name type="ordered locus">Smlt2060</name>
</gene>
<sequence length="465" mass="51781">MLPLVALVGRPNVGKSTIFNALTRTRDALVHDQPGVTRDRNYGVCRLDEDNHFLVVDTGGIAGEDEGLAGATTRQARAAAAEADLILFVVDAREGTSALDDEILAWLRKLSRPTLLLINKIDGTDEDSVRSEFARYGFGEMLTVSAAHRQGLDDLLDEVIQRLPEEGSGEELDNDPNRIRIAFVGRPNVGKSTLVNRILGEERMIASDVPGTTRDSIAVDLERDGREYRLIDTAGLRRRSRVDEVVEKFSVVKTMQSIEQCQVAVLMLDATEGVTDQDATVLGAVLDAGRALVIAINKWDGLTEYQREQAETMLSLKLGFVPWAESVRISAKHGSGLRELFRAVHRAHESANKTFTTSEVNKALEVAYETNPPPTIRGHVSKLRYVHPAGANPPTFIVHGTRLKELQESYKRYLENFFRKRFKLIGTPVSFIFREGTNPYEGKKNVLTERQVKAKRRLMKHVKGK</sequence>
<comment type="function">
    <text evidence="1">GTPase that plays an essential role in the late steps of ribosome biogenesis.</text>
</comment>
<comment type="subunit">
    <text evidence="1">Associates with the 50S ribosomal subunit.</text>
</comment>
<comment type="similarity">
    <text evidence="1">Belongs to the TRAFAC class TrmE-Era-EngA-EngB-Septin-like GTPase superfamily. EngA (Der) GTPase family.</text>
</comment>
<dbReference type="EMBL" id="AM743169">
    <property type="protein sequence ID" value="CAQ45567.1"/>
    <property type="molecule type" value="Genomic_DNA"/>
</dbReference>
<dbReference type="RefSeq" id="WP_012479950.1">
    <property type="nucleotide sequence ID" value="NC_010943.1"/>
</dbReference>
<dbReference type="SMR" id="B2FNR1"/>
<dbReference type="EnsemblBacteria" id="CAQ45567">
    <property type="protein sequence ID" value="CAQ45567"/>
    <property type="gene ID" value="Smlt2060"/>
</dbReference>
<dbReference type="GeneID" id="93833179"/>
<dbReference type="KEGG" id="sml:Smlt2060"/>
<dbReference type="eggNOG" id="COG1160">
    <property type="taxonomic scope" value="Bacteria"/>
</dbReference>
<dbReference type="HOGENOM" id="CLU_016077_5_1_6"/>
<dbReference type="Proteomes" id="UP000008840">
    <property type="component" value="Chromosome"/>
</dbReference>
<dbReference type="GO" id="GO:0005525">
    <property type="term" value="F:GTP binding"/>
    <property type="evidence" value="ECO:0007669"/>
    <property type="project" value="UniProtKB-UniRule"/>
</dbReference>
<dbReference type="GO" id="GO:0043022">
    <property type="term" value="F:ribosome binding"/>
    <property type="evidence" value="ECO:0007669"/>
    <property type="project" value="TreeGrafter"/>
</dbReference>
<dbReference type="GO" id="GO:0042254">
    <property type="term" value="P:ribosome biogenesis"/>
    <property type="evidence" value="ECO:0007669"/>
    <property type="project" value="UniProtKB-KW"/>
</dbReference>
<dbReference type="CDD" id="cd01894">
    <property type="entry name" value="EngA1"/>
    <property type="match status" value="1"/>
</dbReference>
<dbReference type="CDD" id="cd01895">
    <property type="entry name" value="EngA2"/>
    <property type="match status" value="1"/>
</dbReference>
<dbReference type="FunFam" id="3.30.300.20:FF:000004">
    <property type="entry name" value="GTPase Der"/>
    <property type="match status" value="1"/>
</dbReference>
<dbReference type="FunFam" id="3.40.50.300:FF:000040">
    <property type="entry name" value="GTPase Der"/>
    <property type="match status" value="1"/>
</dbReference>
<dbReference type="FunFam" id="3.40.50.300:FF:000057">
    <property type="entry name" value="GTPase Der"/>
    <property type="match status" value="1"/>
</dbReference>
<dbReference type="Gene3D" id="3.30.300.20">
    <property type="match status" value="1"/>
</dbReference>
<dbReference type="Gene3D" id="3.40.50.300">
    <property type="entry name" value="P-loop containing nucleotide triphosphate hydrolases"/>
    <property type="match status" value="2"/>
</dbReference>
<dbReference type="HAMAP" id="MF_00195">
    <property type="entry name" value="GTPase_Der"/>
    <property type="match status" value="1"/>
</dbReference>
<dbReference type="InterPro" id="IPR031166">
    <property type="entry name" value="G_ENGA"/>
</dbReference>
<dbReference type="InterPro" id="IPR006073">
    <property type="entry name" value="GTP-bd"/>
</dbReference>
<dbReference type="InterPro" id="IPR016484">
    <property type="entry name" value="GTPase_Der"/>
</dbReference>
<dbReference type="InterPro" id="IPR032859">
    <property type="entry name" value="KH_dom-like"/>
</dbReference>
<dbReference type="InterPro" id="IPR015946">
    <property type="entry name" value="KH_dom-like_a/b"/>
</dbReference>
<dbReference type="InterPro" id="IPR027417">
    <property type="entry name" value="P-loop_NTPase"/>
</dbReference>
<dbReference type="InterPro" id="IPR005225">
    <property type="entry name" value="Small_GTP-bd"/>
</dbReference>
<dbReference type="NCBIfam" id="TIGR03594">
    <property type="entry name" value="GTPase_EngA"/>
    <property type="match status" value="1"/>
</dbReference>
<dbReference type="NCBIfam" id="TIGR00231">
    <property type="entry name" value="small_GTP"/>
    <property type="match status" value="2"/>
</dbReference>
<dbReference type="PANTHER" id="PTHR43834">
    <property type="entry name" value="GTPASE DER"/>
    <property type="match status" value="1"/>
</dbReference>
<dbReference type="PANTHER" id="PTHR43834:SF6">
    <property type="entry name" value="GTPASE DER"/>
    <property type="match status" value="1"/>
</dbReference>
<dbReference type="Pfam" id="PF14714">
    <property type="entry name" value="KH_dom-like"/>
    <property type="match status" value="1"/>
</dbReference>
<dbReference type="Pfam" id="PF01926">
    <property type="entry name" value="MMR_HSR1"/>
    <property type="match status" value="2"/>
</dbReference>
<dbReference type="PIRSF" id="PIRSF006485">
    <property type="entry name" value="GTP-binding_EngA"/>
    <property type="match status" value="1"/>
</dbReference>
<dbReference type="PRINTS" id="PR00326">
    <property type="entry name" value="GTP1OBG"/>
</dbReference>
<dbReference type="SUPFAM" id="SSF52540">
    <property type="entry name" value="P-loop containing nucleoside triphosphate hydrolases"/>
    <property type="match status" value="2"/>
</dbReference>
<dbReference type="PROSITE" id="PS51712">
    <property type="entry name" value="G_ENGA"/>
    <property type="match status" value="2"/>
</dbReference>